<feature type="chain" id="PRO_0000310481" description="Uncharacterized RING finger protein C4G3.12c">
    <location>
        <begin position="1"/>
        <end position="821"/>
    </location>
</feature>
<feature type="zinc finger region" description="RING-type; atypical" evidence="1">
    <location>
        <begin position="766"/>
        <end position="809"/>
    </location>
</feature>
<feature type="region of interest" description="Disordered" evidence="2">
    <location>
        <begin position="1"/>
        <end position="20"/>
    </location>
</feature>
<feature type="region of interest" description="Disordered" evidence="2">
    <location>
        <begin position="55"/>
        <end position="96"/>
    </location>
</feature>
<feature type="region of interest" description="Disordered" evidence="2">
    <location>
        <begin position="134"/>
        <end position="205"/>
    </location>
</feature>
<feature type="region of interest" description="Disordered" evidence="2">
    <location>
        <begin position="240"/>
        <end position="263"/>
    </location>
</feature>
<feature type="region of interest" description="Disordered" evidence="2">
    <location>
        <begin position="274"/>
        <end position="293"/>
    </location>
</feature>
<feature type="region of interest" description="Disordered" evidence="2">
    <location>
        <begin position="360"/>
        <end position="381"/>
    </location>
</feature>
<feature type="region of interest" description="Disordered" evidence="2">
    <location>
        <begin position="430"/>
        <end position="450"/>
    </location>
</feature>
<feature type="region of interest" description="Disordered" evidence="2">
    <location>
        <begin position="467"/>
        <end position="497"/>
    </location>
</feature>
<feature type="region of interest" description="Disordered" evidence="2">
    <location>
        <begin position="512"/>
        <end position="535"/>
    </location>
</feature>
<feature type="region of interest" description="Disordered" evidence="2">
    <location>
        <begin position="549"/>
        <end position="641"/>
    </location>
</feature>
<feature type="compositionally biased region" description="Polar residues" evidence="2">
    <location>
        <begin position="58"/>
        <end position="88"/>
    </location>
</feature>
<feature type="compositionally biased region" description="Polar residues" evidence="2">
    <location>
        <begin position="185"/>
        <end position="203"/>
    </location>
</feature>
<feature type="compositionally biased region" description="Polar residues" evidence="2">
    <location>
        <begin position="279"/>
        <end position="293"/>
    </location>
</feature>
<feature type="compositionally biased region" description="Polar residues" evidence="2">
    <location>
        <begin position="437"/>
        <end position="450"/>
    </location>
</feature>
<feature type="compositionally biased region" description="Low complexity" evidence="2">
    <location>
        <begin position="517"/>
        <end position="529"/>
    </location>
</feature>
<feature type="compositionally biased region" description="Low complexity" evidence="2">
    <location>
        <begin position="568"/>
        <end position="578"/>
    </location>
</feature>
<feature type="compositionally biased region" description="Polar residues" evidence="2">
    <location>
        <begin position="579"/>
        <end position="622"/>
    </location>
</feature>
<keyword id="KW-0479">Metal-binding</keyword>
<keyword id="KW-1185">Reference proteome</keyword>
<keyword id="KW-0862">Zinc</keyword>
<keyword id="KW-0863">Zinc-finger</keyword>
<dbReference type="EMBL" id="CU329672">
    <property type="protein sequence ID" value="CAB09767.1"/>
    <property type="molecule type" value="Genomic_DNA"/>
</dbReference>
<dbReference type="PIR" id="T41364">
    <property type="entry name" value="T41364"/>
</dbReference>
<dbReference type="RefSeq" id="NP_587826.1">
    <property type="nucleotide sequence ID" value="NM_001022819.2"/>
</dbReference>
<dbReference type="SMR" id="P87237"/>
<dbReference type="BioGRID" id="275930">
    <property type="interactions" value="1"/>
</dbReference>
<dbReference type="FunCoup" id="P87237">
    <property type="interactions" value="271"/>
</dbReference>
<dbReference type="STRING" id="284812.P87237"/>
<dbReference type="iPTMnet" id="P87237"/>
<dbReference type="PaxDb" id="4896-SPCC4G3.12c.1"/>
<dbReference type="EnsemblFungi" id="SPCC4G3.12c.1">
    <property type="protein sequence ID" value="SPCC4G3.12c.1:pep"/>
    <property type="gene ID" value="SPCC4G3.12c"/>
</dbReference>
<dbReference type="KEGG" id="spo:2539364"/>
<dbReference type="PomBase" id="SPCC4G3.12c"/>
<dbReference type="VEuPathDB" id="FungiDB:SPCC4G3.12c"/>
<dbReference type="eggNOG" id="KOG0800">
    <property type="taxonomic scope" value="Eukaryota"/>
</dbReference>
<dbReference type="HOGENOM" id="CLU_359866_0_0_1"/>
<dbReference type="InParanoid" id="P87237"/>
<dbReference type="OMA" id="HKICIDQ"/>
<dbReference type="PRO" id="PR:P87237"/>
<dbReference type="Proteomes" id="UP000002485">
    <property type="component" value="Chromosome III"/>
</dbReference>
<dbReference type="GO" id="GO:0005634">
    <property type="term" value="C:nucleus"/>
    <property type="evidence" value="ECO:0000318"/>
    <property type="project" value="GO_Central"/>
</dbReference>
<dbReference type="GO" id="GO:0061630">
    <property type="term" value="F:ubiquitin protein ligase activity"/>
    <property type="evidence" value="ECO:0000318"/>
    <property type="project" value="GO_Central"/>
</dbReference>
<dbReference type="GO" id="GO:0008270">
    <property type="term" value="F:zinc ion binding"/>
    <property type="evidence" value="ECO:0000255"/>
    <property type="project" value="PomBase"/>
</dbReference>
<dbReference type="CDD" id="cd16461">
    <property type="entry name" value="RING-H2_EL5-like"/>
    <property type="match status" value="1"/>
</dbReference>
<dbReference type="Gene3D" id="3.30.40.10">
    <property type="entry name" value="Zinc/RING finger domain, C3HC4 (zinc finger)"/>
    <property type="match status" value="1"/>
</dbReference>
<dbReference type="InterPro" id="IPR001841">
    <property type="entry name" value="Znf_RING"/>
</dbReference>
<dbReference type="InterPro" id="IPR011016">
    <property type="entry name" value="Znf_RING-CH"/>
</dbReference>
<dbReference type="InterPro" id="IPR013083">
    <property type="entry name" value="Znf_RING/FYVE/PHD"/>
</dbReference>
<dbReference type="PANTHER" id="PTHR45676">
    <property type="entry name" value="RING-H2 FINGER PROTEIN ATL51-RELATED"/>
    <property type="match status" value="1"/>
</dbReference>
<dbReference type="PANTHER" id="PTHR45676:SF41">
    <property type="entry name" value="RING-H2 FINGER PROTEIN ATL66"/>
    <property type="match status" value="1"/>
</dbReference>
<dbReference type="Pfam" id="PF13639">
    <property type="entry name" value="zf-RING_2"/>
    <property type="match status" value="1"/>
</dbReference>
<dbReference type="SMART" id="SM00184">
    <property type="entry name" value="RING"/>
    <property type="match status" value="1"/>
</dbReference>
<dbReference type="SMART" id="SM00744">
    <property type="entry name" value="RINGv"/>
    <property type="match status" value="1"/>
</dbReference>
<dbReference type="SUPFAM" id="SSF57850">
    <property type="entry name" value="RING/U-box"/>
    <property type="match status" value="1"/>
</dbReference>
<dbReference type="PROSITE" id="PS50089">
    <property type="entry name" value="ZF_RING_2"/>
    <property type="match status" value="1"/>
</dbReference>
<name>YC0C_SCHPO</name>
<gene>
    <name type="ORF">SPCC4G3.12c</name>
</gene>
<proteinExistence type="predicted"/>
<organism>
    <name type="scientific">Schizosaccharomyces pombe (strain 972 / ATCC 24843)</name>
    <name type="common">Fission yeast</name>
    <dbReference type="NCBI Taxonomy" id="284812"/>
    <lineage>
        <taxon>Eukaryota</taxon>
        <taxon>Fungi</taxon>
        <taxon>Dikarya</taxon>
        <taxon>Ascomycota</taxon>
        <taxon>Taphrinomycotina</taxon>
        <taxon>Schizosaccharomycetes</taxon>
        <taxon>Schizosaccharomycetales</taxon>
        <taxon>Schizosaccharomycetaceae</taxon>
        <taxon>Schizosaccharomyces</taxon>
    </lineage>
</organism>
<protein>
    <recommendedName>
        <fullName>Uncharacterized RING finger protein C4G3.12c</fullName>
    </recommendedName>
</protein>
<sequence>MGQTNSRHSLIETDEPTTSSRVSMLVDRVKLLWKRYTTPLSTEDGSREAHFAVPSENYADTPSRNTPNSSNGFPSETLVTSSAHCSTQPHKDEAYSHHGYSSTMALDDSSLAQTYHEYEEGTSGNSPLRRAIGSYDFLHPRPSGNSSRLDRNSSRPFTSSFHSAPFLSSYGSSNDPSQERVNEYSLPSNSNSTYTTPLQSINNEHPLPTVLENNALLNNSGNSPSLINHLRQYLNQDFSRLHQSPSPIPNSNDNDSQTRRSSWSSIASAFNDFPEEFPNASNPEAHSNFTPLNGNDESTVNMLSRLLSAAAIETVASIMNSEARNMDSQNMANGEPSRFRSVDGSFEQFLTDLRSGNLTNVLQNSSQNGNDQISSDPESNSSDLQYLRMFRFPSFHQSHNQPASNNEASDTNGPALVPVLIVCMRSISETSEDHAPTMTQENQSLHNESRENISINDITERMAQSTEFSTDLPPTFERSNSTFSHPEPTRSDFSQAFTPVSDFPANLFPGSRNLFPTSNSGNQSTSSFSRYNQPTVSVDLRNSSILRRAQEPVNGSTGENHIGDDYISSLLDSSNSNSQRPFSTVPSESNVFSRNASGNFSMSQTHQPTTDNTSSFSTQPGRLSTGLHHFPSDRDLLSNQTRRSSLARSYRFEEQLSVDDNTSDFSTLASNGAADMVTQTHSEGTFSNSTHGDWLIYVFGGLFPEHHPVLSTVSLFSDNPMYEDLLALTTYLGPAKKPVASHEDVKRSGGLFAYFDDASLSSADSCLICLETYTNGDICRKLQACKHFFHQACIDQWLTTGNNSCPLCRAHGVTTQAEEEN</sequence>
<evidence type="ECO:0000255" key="1">
    <source>
        <dbReference type="PROSITE-ProRule" id="PRU00175"/>
    </source>
</evidence>
<evidence type="ECO:0000256" key="2">
    <source>
        <dbReference type="SAM" id="MobiDB-lite"/>
    </source>
</evidence>
<reference key="1">
    <citation type="journal article" date="2002" name="Nature">
        <title>The genome sequence of Schizosaccharomyces pombe.</title>
        <authorList>
            <person name="Wood V."/>
            <person name="Gwilliam R."/>
            <person name="Rajandream M.A."/>
            <person name="Lyne M.H."/>
            <person name="Lyne R."/>
            <person name="Stewart A."/>
            <person name="Sgouros J.G."/>
            <person name="Peat N."/>
            <person name="Hayles J."/>
            <person name="Baker S.G."/>
            <person name="Basham D."/>
            <person name="Bowman S."/>
            <person name="Brooks K."/>
            <person name="Brown D."/>
            <person name="Brown S."/>
            <person name="Chillingworth T."/>
            <person name="Churcher C.M."/>
            <person name="Collins M."/>
            <person name="Connor R."/>
            <person name="Cronin A."/>
            <person name="Davis P."/>
            <person name="Feltwell T."/>
            <person name="Fraser A."/>
            <person name="Gentles S."/>
            <person name="Goble A."/>
            <person name="Hamlin N."/>
            <person name="Harris D.E."/>
            <person name="Hidalgo J."/>
            <person name="Hodgson G."/>
            <person name="Holroyd S."/>
            <person name="Hornsby T."/>
            <person name="Howarth S."/>
            <person name="Huckle E.J."/>
            <person name="Hunt S."/>
            <person name="Jagels K."/>
            <person name="James K.D."/>
            <person name="Jones L."/>
            <person name="Jones M."/>
            <person name="Leather S."/>
            <person name="McDonald S."/>
            <person name="McLean J."/>
            <person name="Mooney P."/>
            <person name="Moule S."/>
            <person name="Mungall K.L."/>
            <person name="Murphy L.D."/>
            <person name="Niblett D."/>
            <person name="Odell C."/>
            <person name="Oliver K."/>
            <person name="O'Neil S."/>
            <person name="Pearson D."/>
            <person name="Quail M.A."/>
            <person name="Rabbinowitsch E."/>
            <person name="Rutherford K.M."/>
            <person name="Rutter S."/>
            <person name="Saunders D."/>
            <person name="Seeger K."/>
            <person name="Sharp S."/>
            <person name="Skelton J."/>
            <person name="Simmonds M.N."/>
            <person name="Squares R."/>
            <person name="Squares S."/>
            <person name="Stevens K."/>
            <person name="Taylor K."/>
            <person name="Taylor R.G."/>
            <person name="Tivey A."/>
            <person name="Walsh S.V."/>
            <person name="Warren T."/>
            <person name="Whitehead S."/>
            <person name="Woodward J.R."/>
            <person name="Volckaert G."/>
            <person name="Aert R."/>
            <person name="Robben J."/>
            <person name="Grymonprez B."/>
            <person name="Weltjens I."/>
            <person name="Vanstreels E."/>
            <person name="Rieger M."/>
            <person name="Schaefer M."/>
            <person name="Mueller-Auer S."/>
            <person name="Gabel C."/>
            <person name="Fuchs M."/>
            <person name="Duesterhoeft A."/>
            <person name="Fritzc C."/>
            <person name="Holzer E."/>
            <person name="Moestl D."/>
            <person name="Hilbert H."/>
            <person name="Borzym K."/>
            <person name="Langer I."/>
            <person name="Beck A."/>
            <person name="Lehrach H."/>
            <person name="Reinhardt R."/>
            <person name="Pohl T.M."/>
            <person name="Eger P."/>
            <person name="Zimmermann W."/>
            <person name="Wedler H."/>
            <person name="Wambutt R."/>
            <person name="Purnelle B."/>
            <person name="Goffeau A."/>
            <person name="Cadieu E."/>
            <person name="Dreano S."/>
            <person name="Gloux S."/>
            <person name="Lelaure V."/>
            <person name="Mottier S."/>
            <person name="Galibert F."/>
            <person name="Aves S.J."/>
            <person name="Xiang Z."/>
            <person name="Hunt C."/>
            <person name="Moore K."/>
            <person name="Hurst S.M."/>
            <person name="Lucas M."/>
            <person name="Rochet M."/>
            <person name="Gaillardin C."/>
            <person name="Tallada V.A."/>
            <person name="Garzon A."/>
            <person name="Thode G."/>
            <person name="Daga R.R."/>
            <person name="Cruzado L."/>
            <person name="Jimenez J."/>
            <person name="Sanchez M."/>
            <person name="del Rey F."/>
            <person name="Benito J."/>
            <person name="Dominguez A."/>
            <person name="Revuelta J.L."/>
            <person name="Moreno S."/>
            <person name="Armstrong J."/>
            <person name="Forsburg S.L."/>
            <person name="Cerutti L."/>
            <person name="Lowe T."/>
            <person name="McCombie W.R."/>
            <person name="Paulsen I."/>
            <person name="Potashkin J."/>
            <person name="Shpakovski G.V."/>
            <person name="Ussery D."/>
            <person name="Barrell B.G."/>
            <person name="Nurse P."/>
        </authorList>
    </citation>
    <scope>NUCLEOTIDE SEQUENCE [LARGE SCALE GENOMIC DNA]</scope>
    <source>
        <strain>972 / ATCC 24843</strain>
    </source>
</reference>
<accession>P87237</accession>